<proteinExistence type="inferred from homology"/>
<organism>
    <name type="scientific">Hydrogenovibrio crunogenus (strain DSM 25203 / XCL-2)</name>
    <name type="common">Thiomicrospira crunogena</name>
    <dbReference type="NCBI Taxonomy" id="317025"/>
    <lineage>
        <taxon>Bacteria</taxon>
        <taxon>Pseudomonadati</taxon>
        <taxon>Pseudomonadota</taxon>
        <taxon>Gammaproteobacteria</taxon>
        <taxon>Thiotrichales</taxon>
        <taxon>Piscirickettsiaceae</taxon>
        <taxon>Hydrogenovibrio</taxon>
    </lineage>
</organism>
<feature type="chain" id="PRO_1000002179" description="SsrA-binding protein">
    <location>
        <begin position="1"/>
        <end position="158"/>
    </location>
</feature>
<comment type="function">
    <text evidence="1">Required for rescue of stalled ribosomes mediated by trans-translation. Binds to transfer-messenger RNA (tmRNA), required for stable association of tmRNA with ribosomes. tmRNA and SmpB together mimic tRNA shape, replacing the anticodon stem-loop with SmpB. tmRNA is encoded by the ssrA gene; the 2 termini fold to resemble tRNA(Ala) and it encodes a 'tag peptide', a short internal open reading frame. During trans-translation Ala-aminoacylated tmRNA acts like a tRNA, entering the A-site of stalled ribosomes, displacing the stalled mRNA. The ribosome then switches to translate the ORF on the tmRNA; the nascent peptide is terminated with the 'tag peptide' encoded by the tmRNA and targeted for degradation. The ribosome is freed to recommence translation, which seems to be the essential function of trans-translation.</text>
</comment>
<comment type="subcellular location">
    <subcellularLocation>
        <location evidence="1">Cytoplasm</location>
    </subcellularLocation>
    <text evidence="1">The tmRNA-SmpB complex associates with stalled 70S ribosomes.</text>
</comment>
<comment type="similarity">
    <text evidence="1">Belongs to the SmpB family.</text>
</comment>
<keyword id="KW-0963">Cytoplasm</keyword>
<keyword id="KW-0694">RNA-binding</keyword>
<evidence type="ECO:0000255" key="1">
    <source>
        <dbReference type="HAMAP-Rule" id="MF_00023"/>
    </source>
</evidence>
<sequence length="158" mass="18357">MAKKKKQNNPNSIAQNKKARFDYFIEETFEAGLALEGWEVKSLRQGKVQINESYILLKNNEAWLFGALITPLITASTHSNHDPLRLRKLLMHRREIDRLMGLVDQKGFTVVPLGLHWSKGKVKISIGLAKGKKLHDKRATQKERDWNRDKQRIMKYHA</sequence>
<dbReference type="EMBL" id="CP000109">
    <property type="protein sequence ID" value="ABB42004.1"/>
    <property type="molecule type" value="Genomic_DNA"/>
</dbReference>
<dbReference type="SMR" id="Q31FR9"/>
<dbReference type="STRING" id="317025.Tcr_1409"/>
<dbReference type="KEGG" id="tcx:Tcr_1409"/>
<dbReference type="eggNOG" id="COG0691">
    <property type="taxonomic scope" value="Bacteria"/>
</dbReference>
<dbReference type="HOGENOM" id="CLU_108953_3_0_6"/>
<dbReference type="OrthoDB" id="9805462at2"/>
<dbReference type="GO" id="GO:0005829">
    <property type="term" value="C:cytosol"/>
    <property type="evidence" value="ECO:0007669"/>
    <property type="project" value="TreeGrafter"/>
</dbReference>
<dbReference type="GO" id="GO:0003723">
    <property type="term" value="F:RNA binding"/>
    <property type="evidence" value="ECO:0007669"/>
    <property type="project" value="UniProtKB-UniRule"/>
</dbReference>
<dbReference type="GO" id="GO:0070929">
    <property type="term" value="P:trans-translation"/>
    <property type="evidence" value="ECO:0007669"/>
    <property type="project" value="UniProtKB-UniRule"/>
</dbReference>
<dbReference type="CDD" id="cd09294">
    <property type="entry name" value="SmpB"/>
    <property type="match status" value="1"/>
</dbReference>
<dbReference type="Gene3D" id="2.40.280.10">
    <property type="match status" value="1"/>
</dbReference>
<dbReference type="HAMAP" id="MF_00023">
    <property type="entry name" value="SmpB"/>
    <property type="match status" value="1"/>
</dbReference>
<dbReference type="InterPro" id="IPR023620">
    <property type="entry name" value="SmpB"/>
</dbReference>
<dbReference type="InterPro" id="IPR000037">
    <property type="entry name" value="SsrA-bd_prot"/>
</dbReference>
<dbReference type="InterPro" id="IPR020081">
    <property type="entry name" value="SsrA-bd_prot_CS"/>
</dbReference>
<dbReference type="NCBIfam" id="NF003843">
    <property type="entry name" value="PRK05422.1"/>
    <property type="match status" value="1"/>
</dbReference>
<dbReference type="NCBIfam" id="TIGR00086">
    <property type="entry name" value="smpB"/>
    <property type="match status" value="1"/>
</dbReference>
<dbReference type="PANTHER" id="PTHR30308:SF2">
    <property type="entry name" value="SSRA-BINDING PROTEIN"/>
    <property type="match status" value="1"/>
</dbReference>
<dbReference type="PANTHER" id="PTHR30308">
    <property type="entry name" value="TMRNA-BINDING COMPONENT OF TRANS-TRANSLATION TAGGING COMPLEX"/>
    <property type="match status" value="1"/>
</dbReference>
<dbReference type="Pfam" id="PF01668">
    <property type="entry name" value="SmpB"/>
    <property type="match status" value="1"/>
</dbReference>
<dbReference type="SUPFAM" id="SSF74982">
    <property type="entry name" value="Small protein B (SmpB)"/>
    <property type="match status" value="1"/>
</dbReference>
<dbReference type="PROSITE" id="PS01317">
    <property type="entry name" value="SSRP"/>
    <property type="match status" value="1"/>
</dbReference>
<reference key="1">
    <citation type="journal article" date="2006" name="PLoS Biol.">
        <title>The genome of deep-sea vent chemolithoautotroph Thiomicrospira crunogena XCL-2.</title>
        <authorList>
            <person name="Scott K.M."/>
            <person name="Sievert S.M."/>
            <person name="Abril F.N."/>
            <person name="Ball L.A."/>
            <person name="Barrett C.J."/>
            <person name="Blake R.A."/>
            <person name="Boller A.J."/>
            <person name="Chain P.S.G."/>
            <person name="Clark J.A."/>
            <person name="Davis C.R."/>
            <person name="Detter C."/>
            <person name="Do K.F."/>
            <person name="Dobrinski K.P."/>
            <person name="Faza B.I."/>
            <person name="Fitzpatrick K.A."/>
            <person name="Freyermuth S.K."/>
            <person name="Harmer T.L."/>
            <person name="Hauser L.J."/>
            <person name="Huegler M."/>
            <person name="Kerfeld C.A."/>
            <person name="Klotz M.G."/>
            <person name="Kong W.W."/>
            <person name="Land M."/>
            <person name="Lapidus A."/>
            <person name="Larimer F.W."/>
            <person name="Longo D.L."/>
            <person name="Lucas S."/>
            <person name="Malfatti S.A."/>
            <person name="Massey S.E."/>
            <person name="Martin D.D."/>
            <person name="McCuddin Z."/>
            <person name="Meyer F."/>
            <person name="Moore J.L."/>
            <person name="Ocampo L.H. Jr."/>
            <person name="Paul J.H."/>
            <person name="Paulsen I.T."/>
            <person name="Reep D.K."/>
            <person name="Ren Q."/>
            <person name="Ross R.L."/>
            <person name="Sato P.Y."/>
            <person name="Thomas P."/>
            <person name="Tinkham L.E."/>
            <person name="Zeruth G.T."/>
        </authorList>
    </citation>
    <scope>NUCLEOTIDE SEQUENCE [LARGE SCALE GENOMIC DNA]</scope>
    <source>
        <strain>DSM 25203 / XCL-2</strain>
    </source>
</reference>
<accession>Q31FR9</accession>
<protein>
    <recommendedName>
        <fullName evidence="1">SsrA-binding protein</fullName>
    </recommendedName>
    <alternativeName>
        <fullName evidence="1">Small protein B</fullName>
    </alternativeName>
</protein>
<gene>
    <name evidence="1" type="primary">smpB</name>
    <name type="ordered locus">Tcr_1409</name>
</gene>
<name>SSRP_HYDCU</name>